<geneLocation type="chloroplast"/>
<evidence type="ECO:0000255" key="1">
    <source>
        <dbReference type="HAMAP-Rule" id="MF_01310"/>
    </source>
</evidence>
<evidence type="ECO:0000305" key="2"/>
<dbReference type="EMBL" id="Z67753">
    <property type="protein sequence ID" value="CAA91628.1"/>
    <property type="molecule type" value="Genomic_DNA"/>
</dbReference>
<dbReference type="PIR" id="S78255">
    <property type="entry name" value="S78255"/>
</dbReference>
<dbReference type="RefSeq" id="NP_043596.1">
    <property type="nucleotide sequence ID" value="NC_001713.1"/>
</dbReference>
<dbReference type="SMR" id="P49499"/>
<dbReference type="GeneID" id="801699"/>
<dbReference type="GO" id="GO:0009507">
    <property type="term" value="C:chloroplast"/>
    <property type="evidence" value="ECO:0007669"/>
    <property type="project" value="UniProtKB-SubCell"/>
</dbReference>
<dbReference type="GO" id="GO:1990904">
    <property type="term" value="C:ribonucleoprotein complex"/>
    <property type="evidence" value="ECO:0007669"/>
    <property type="project" value="UniProtKB-KW"/>
</dbReference>
<dbReference type="GO" id="GO:0005840">
    <property type="term" value="C:ribosome"/>
    <property type="evidence" value="ECO:0007669"/>
    <property type="project" value="UniProtKB-KW"/>
</dbReference>
<dbReference type="GO" id="GO:0019843">
    <property type="term" value="F:rRNA binding"/>
    <property type="evidence" value="ECO:0007669"/>
    <property type="project" value="UniProtKB-UniRule"/>
</dbReference>
<dbReference type="GO" id="GO:0003735">
    <property type="term" value="F:structural constituent of ribosome"/>
    <property type="evidence" value="ECO:0007669"/>
    <property type="project" value="InterPro"/>
</dbReference>
<dbReference type="GO" id="GO:0006412">
    <property type="term" value="P:translation"/>
    <property type="evidence" value="ECO:0007669"/>
    <property type="project" value="UniProtKB-UniRule"/>
</dbReference>
<dbReference type="FunFam" id="3.30.420.80:FF:000001">
    <property type="entry name" value="30S ribosomal protein S11"/>
    <property type="match status" value="1"/>
</dbReference>
<dbReference type="Gene3D" id="3.30.420.80">
    <property type="entry name" value="Ribosomal protein S11"/>
    <property type="match status" value="1"/>
</dbReference>
<dbReference type="HAMAP" id="MF_01310">
    <property type="entry name" value="Ribosomal_uS11"/>
    <property type="match status" value="1"/>
</dbReference>
<dbReference type="InterPro" id="IPR001971">
    <property type="entry name" value="Ribosomal_uS11"/>
</dbReference>
<dbReference type="InterPro" id="IPR019981">
    <property type="entry name" value="Ribosomal_uS11_bac-type"/>
</dbReference>
<dbReference type="InterPro" id="IPR018102">
    <property type="entry name" value="Ribosomal_uS11_CS"/>
</dbReference>
<dbReference type="InterPro" id="IPR036967">
    <property type="entry name" value="Ribosomal_uS11_sf"/>
</dbReference>
<dbReference type="NCBIfam" id="NF003698">
    <property type="entry name" value="PRK05309.1"/>
    <property type="match status" value="1"/>
</dbReference>
<dbReference type="NCBIfam" id="TIGR03632">
    <property type="entry name" value="uS11_bact"/>
    <property type="match status" value="1"/>
</dbReference>
<dbReference type="PANTHER" id="PTHR11759">
    <property type="entry name" value="40S RIBOSOMAL PROTEIN S14/30S RIBOSOMAL PROTEIN S11"/>
    <property type="match status" value="1"/>
</dbReference>
<dbReference type="Pfam" id="PF00411">
    <property type="entry name" value="Ribosomal_S11"/>
    <property type="match status" value="1"/>
</dbReference>
<dbReference type="PIRSF" id="PIRSF002131">
    <property type="entry name" value="Ribosomal_S11"/>
    <property type="match status" value="1"/>
</dbReference>
<dbReference type="SUPFAM" id="SSF53137">
    <property type="entry name" value="Translational machinery components"/>
    <property type="match status" value="1"/>
</dbReference>
<dbReference type="PROSITE" id="PS00054">
    <property type="entry name" value="RIBOSOMAL_S11"/>
    <property type="match status" value="1"/>
</dbReference>
<proteinExistence type="inferred from homology"/>
<sequence>MAQKIRKSTFKKDKNSSINGVVHIQSTFNNTIVTITNITGDTISWASAGSSGFKGARKGTPFAAQTAAEKAALDALSKGMKSVEVLVKGQGSGRETAIRSIEGAGFEVTSIQDITPVPHNGCRPPKRRRV</sequence>
<reference key="1">
    <citation type="journal article" date="1995" name="Plant Mol. Biol. Rep.">
        <title>The chloroplast genome of a chlorophyll a+c-containing alga, Odontella sinensis.</title>
        <authorList>
            <person name="Kowallik K.V."/>
            <person name="Stoebe B."/>
            <person name="Schaffran I."/>
            <person name="Kroth-Pancic P."/>
            <person name="Freier U."/>
        </authorList>
    </citation>
    <scope>NUCLEOTIDE SEQUENCE [LARGE SCALE GENOMIC DNA]</scope>
</reference>
<organism>
    <name type="scientific">Trieres chinensis</name>
    <name type="common">Marine centric diatom</name>
    <name type="synonym">Odontella sinensis</name>
    <dbReference type="NCBI Taxonomy" id="1514140"/>
    <lineage>
        <taxon>Eukaryota</taxon>
        <taxon>Sar</taxon>
        <taxon>Stramenopiles</taxon>
        <taxon>Ochrophyta</taxon>
        <taxon>Bacillariophyta</taxon>
        <taxon>Mediophyceae</taxon>
        <taxon>Biddulphiophycidae</taxon>
        <taxon>Eupodiscales</taxon>
        <taxon>Parodontellaceae</taxon>
        <taxon>Trieres</taxon>
    </lineage>
</organism>
<accession>P49499</accession>
<feature type="chain" id="PRO_0000123312" description="Small ribosomal subunit protein uS11c">
    <location>
        <begin position="1"/>
        <end position="130"/>
    </location>
</feature>
<keyword id="KW-0150">Chloroplast</keyword>
<keyword id="KW-0934">Plastid</keyword>
<keyword id="KW-0687">Ribonucleoprotein</keyword>
<keyword id="KW-0689">Ribosomal protein</keyword>
<keyword id="KW-0694">RNA-binding</keyword>
<keyword id="KW-0699">rRNA-binding</keyword>
<comment type="subunit">
    <text evidence="1">Part of the 30S ribosomal subunit.</text>
</comment>
<comment type="subcellular location">
    <subcellularLocation>
        <location>Plastid</location>
        <location>Chloroplast</location>
    </subcellularLocation>
</comment>
<comment type="similarity">
    <text evidence="1">Belongs to the universal ribosomal protein uS11 family.</text>
</comment>
<name>RR11_TRICV</name>
<protein>
    <recommendedName>
        <fullName evidence="1">Small ribosomal subunit protein uS11c</fullName>
    </recommendedName>
    <alternativeName>
        <fullName evidence="2">30S ribosomal protein S11, chloroplastic</fullName>
    </alternativeName>
</protein>
<gene>
    <name evidence="1" type="primary">rps11</name>
</gene>